<reference key="1">
    <citation type="submission" date="2006-04" db="EMBL/GenBank/DDBJ databases">
        <authorList>
            <person name="Clee S.M."/>
            <person name="Klass D.M."/>
            <person name="Attie A.D."/>
        </authorList>
    </citation>
    <scope>NUCLEOTIDE SEQUENCE [GENOMIC DNA]</scope>
</reference>
<reference key="2">
    <citation type="journal article" date="2005" name="Science">
        <title>The transcriptional landscape of the mammalian genome.</title>
        <authorList>
            <person name="Carninci P."/>
            <person name="Kasukawa T."/>
            <person name="Katayama S."/>
            <person name="Gough J."/>
            <person name="Frith M.C."/>
            <person name="Maeda N."/>
            <person name="Oyama R."/>
            <person name="Ravasi T."/>
            <person name="Lenhard B."/>
            <person name="Wells C."/>
            <person name="Kodzius R."/>
            <person name="Shimokawa K."/>
            <person name="Bajic V.B."/>
            <person name="Brenner S.E."/>
            <person name="Batalov S."/>
            <person name="Forrest A.R."/>
            <person name="Zavolan M."/>
            <person name="Davis M.J."/>
            <person name="Wilming L.G."/>
            <person name="Aidinis V."/>
            <person name="Allen J.E."/>
            <person name="Ambesi-Impiombato A."/>
            <person name="Apweiler R."/>
            <person name="Aturaliya R.N."/>
            <person name="Bailey T.L."/>
            <person name="Bansal M."/>
            <person name="Baxter L."/>
            <person name="Beisel K.W."/>
            <person name="Bersano T."/>
            <person name="Bono H."/>
            <person name="Chalk A.M."/>
            <person name="Chiu K.P."/>
            <person name="Choudhary V."/>
            <person name="Christoffels A."/>
            <person name="Clutterbuck D.R."/>
            <person name="Crowe M.L."/>
            <person name="Dalla E."/>
            <person name="Dalrymple B.P."/>
            <person name="de Bono B."/>
            <person name="Della Gatta G."/>
            <person name="di Bernardo D."/>
            <person name="Down T."/>
            <person name="Engstrom P."/>
            <person name="Fagiolini M."/>
            <person name="Faulkner G."/>
            <person name="Fletcher C.F."/>
            <person name="Fukushima T."/>
            <person name="Furuno M."/>
            <person name="Futaki S."/>
            <person name="Gariboldi M."/>
            <person name="Georgii-Hemming P."/>
            <person name="Gingeras T.R."/>
            <person name="Gojobori T."/>
            <person name="Green R.E."/>
            <person name="Gustincich S."/>
            <person name="Harbers M."/>
            <person name="Hayashi Y."/>
            <person name="Hensch T.K."/>
            <person name="Hirokawa N."/>
            <person name="Hill D."/>
            <person name="Huminiecki L."/>
            <person name="Iacono M."/>
            <person name="Ikeo K."/>
            <person name="Iwama A."/>
            <person name="Ishikawa T."/>
            <person name="Jakt M."/>
            <person name="Kanapin A."/>
            <person name="Katoh M."/>
            <person name="Kawasawa Y."/>
            <person name="Kelso J."/>
            <person name="Kitamura H."/>
            <person name="Kitano H."/>
            <person name="Kollias G."/>
            <person name="Krishnan S.P."/>
            <person name="Kruger A."/>
            <person name="Kummerfeld S.K."/>
            <person name="Kurochkin I.V."/>
            <person name="Lareau L.F."/>
            <person name="Lazarevic D."/>
            <person name="Lipovich L."/>
            <person name="Liu J."/>
            <person name="Liuni S."/>
            <person name="McWilliam S."/>
            <person name="Madan Babu M."/>
            <person name="Madera M."/>
            <person name="Marchionni L."/>
            <person name="Matsuda H."/>
            <person name="Matsuzawa S."/>
            <person name="Miki H."/>
            <person name="Mignone F."/>
            <person name="Miyake S."/>
            <person name="Morris K."/>
            <person name="Mottagui-Tabar S."/>
            <person name="Mulder N."/>
            <person name="Nakano N."/>
            <person name="Nakauchi H."/>
            <person name="Ng P."/>
            <person name="Nilsson R."/>
            <person name="Nishiguchi S."/>
            <person name="Nishikawa S."/>
            <person name="Nori F."/>
            <person name="Ohara O."/>
            <person name="Okazaki Y."/>
            <person name="Orlando V."/>
            <person name="Pang K.C."/>
            <person name="Pavan W.J."/>
            <person name="Pavesi G."/>
            <person name="Pesole G."/>
            <person name="Petrovsky N."/>
            <person name="Piazza S."/>
            <person name="Reed J."/>
            <person name="Reid J.F."/>
            <person name="Ring B.Z."/>
            <person name="Ringwald M."/>
            <person name="Rost B."/>
            <person name="Ruan Y."/>
            <person name="Salzberg S.L."/>
            <person name="Sandelin A."/>
            <person name="Schneider C."/>
            <person name="Schoenbach C."/>
            <person name="Sekiguchi K."/>
            <person name="Semple C.A."/>
            <person name="Seno S."/>
            <person name="Sessa L."/>
            <person name="Sheng Y."/>
            <person name="Shibata Y."/>
            <person name="Shimada H."/>
            <person name="Shimada K."/>
            <person name="Silva D."/>
            <person name="Sinclair B."/>
            <person name="Sperling S."/>
            <person name="Stupka E."/>
            <person name="Sugiura K."/>
            <person name="Sultana R."/>
            <person name="Takenaka Y."/>
            <person name="Taki K."/>
            <person name="Tammoja K."/>
            <person name="Tan S.L."/>
            <person name="Tang S."/>
            <person name="Taylor M.S."/>
            <person name="Tegner J."/>
            <person name="Teichmann S.A."/>
            <person name="Ueda H.R."/>
            <person name="van Nimwegen E."/>
            <person name="Verardo R."/>
            <person name="Wei C.L."/>
            <person name="Yagi K."/>
            <person name="Yamanishi H."/>
            <person name="Zabarovsky E."/>
            <person name="Zhu S."/>
            <person name="Zimmer A."/>
            <person name="Hide W."/>
            <person name="Bult C."/>
            <person name="Grimmond S.M."/>
            <person name="Teasdale R.D."/>
            <person name="Liu E.T."/>
            <person name="Brusic V."/>
            <person name="Quackenbush J."/>
            <person name="Wahlestedt C."/>
            <person name="Mattick J.S."/>
            <person name="Hume D.A."/>
            <person name="Kai C."/>
            <person name="Sasaki D."/>
            <person name="Tomaru Y."/>
            <person name="Fukuda S."/>
            <person name="Kanamori-Katayama M."/>
            <person name="Suzuki M."/>
            <person name="Aoki J."/>
            <person name="Arakawa T."/>
            <person name="Iida J."/>
            <person name="Imamura K."/>
            <person name="Itoh M."/>
            <person name="Kato T."/>
            <person name="Kawaji H."/>
            <person name="Kawagashira N."/>
            <person name="Kawashima T."/>
            <person name="Kojima M."/>
            <person name="Kondo S."/>
            <person name="Konno H."/>
            <person name="Nakano K."/>
            <person name="Ninomiya N."/>
            <person name="Nishio T."/>
            <person name="Okada M."/>
            <person name="Plessy C."/>
            <person name="Shibata K."/>
            <person name="Shiraki T."/>
            <person name="Suzuki S."/>
            <person name="Tagami M."/>
            <person name="Waki K."/>
            <person name="Watahiki A."/>
            <person name="Okamura-Oho Y."/>
            <person name="Suzuki H."/>
            <person name="Kawai J."/>
            <person name="Hayashizaki Y."/>
        </authorList>
    </citation>
    <scope>NUCLEOTIDE SEQUENCE [LARGE SCALE MRNA]</scope>
    <source>
        <strain>C57BL/6J</strain>
        <tissue>Colon</tissue>
        <tissue>Submandibular gland</tissue>
    </source>
</reference>
<reference key="3">
    <citation type="journal article" date="2004" name="Genome Res.">
        <title>The status, quality, and expansion of the NIH full-length cDNA project: the Mammalian Gene Collection (MGC).</title>
        <authorList>
            <consortium name="The MGC Project Team"/>
        </authorList>
    </citation>
    <scope>NUCLEOTIDE SEQUENCE [LARGE SCALE MRNA]</scope>
    <source>
        <strain>C57BL/6J</strain>
        <tissue>Olfactory epithelium</tissue>
        <tissue>Thymus</tissue>
    </source>
</reference>
<reference key="4">
    <citation type="journal article" date="2010" name="Cell">
        <title>A tissue-specific atlas of mouse protein phosphorylation and expression.</title>
        <authorList>
            <person name="Huttlin E.L."/>
            <person name="Jedrychowski M.P."/>
            <person name="Elias J.E."/>
            <person name="Goswami T."/>
            <person name="Rad R."/>
            <person name="Beausoleil S.A."/>
            <person name="Villen J."/>
            <person name="Haas W."/>
            <person name="Sowa M.E."/>
            <person name="Gygi S.P."/>
        </authorList>
    </citation>
    <scope>IDENTIFICATION BY MASS SPECTROMETRY [LARGE SCALE ANALYSIS]</scope>
    <source>
        <tissue>Spleen</tissue>
        <tissue>Testis</tissue>
    </source>
</reference>
<proteinExistence type="evidence at protein level"/>
<feature type="chain" id="PRO_0000218909" description="Survival of motor neuron-related-splicing factor 30">
    <location>
        <begin position="1"/>
        <end position="238"/>
    </location>
</feature>
<feature type="domain" description="Tudor" evidence="3">
    <location>
        <begin position="72"/>
        <end position="132"/>
    </location>
</feature>
<feature type="short sequence motif" description="Nuclear localization signal" evidence="2">
    <location>
        <begin position="142"/>
        <end position="160"/>
    </location>
</feature>
<feature type="modified residue" description="Phosphoserine" evidence="1">
    <location>
        <position position="201"/>
    </location>
</feature>
<feature type="modified residue" description="N6-acetyllysine" evidence="1">
    <location>
        <position position="219"/>
    </location>
</feature>
<organism>
    <name type="scientific">Mus musculus</name>
    <name type="common">Mouse</name>
    <dbReference type="NCBI Taxonomy" id="10090"/>
    <lineage>
        <taxon>Eukaryota</taxon>
        <taxon>Metazoa</taxon>
        <taxon>Chordata</taxon>
        <taxon>Craniata</taxon>
        <taxon>Vertebrata</taxon>
        <taxon>Euteleostomi</taxon>
        <taxon>Mammalia</taxon>
        <taxon>Eutheria</taxon>
        <taxon>Euarchontoglires</taxon>
        <taxon>Glires</taxon>
        <taxon>Rodentia</taxon>
        <taxon>Myomorpha</taxon>
        <taxon>Muroidea</taxon>
        <taxon>Muridae</taxon>
        <taxon>Murinae</taxon>
        <taxon>Mus</taxon>
        <taxon>Mus</taxon>
    </lineage>
</organism>
<dbReference type="EMBL" id="DQ479929">
    <property type="protein sequence ID" value="ABF48508.1"/>
    <property type="molecule type" value="Genomic_DNA"/>
</dbReference>
<dbReference type="EMBL" id="AK078834">
    <property type="protein sequence ID" value="BAC37414.1"/>
    <property type="molecule type" value="mRNA"/>
</dbReference>
<dbReference type="EMBL" id="AK090047">
    <property type="protein sequence ID" value="BAC41064.1"/>
    <property type="molecule type" value="mRNA"/>
</dbReference>
<dbReference type="EMBL" id="BC058779">
    <property type="protein sequence ID" value="AAH58779.1"/>
    <property type="molecule type" value="mRNA"/>
</dbReference>
<dbReference type="EMBL" id="BC098223">
    <property type="protein sequence ID" value="AAH98223.1"/>
    <property type="molecule type" value="mRNA"/>
</dbReference>
<dbReference type="CCDS" id="CCDS29902.1"/>
<dbReference type="RefSeq" id="NP_001343915.1">
    <property type="nucleotide sequence ID" value="NM_001356986.1"/>
</dbReference>
<dbReference type="RefSeq" id="NP_766017.1">
    <property type="nucleotide sequence ID" value="NM_172429.3"/>
</dbReference>
<dbReference type="RefSeq" id="XP_006527504.1">
    <property type="nucleotide sequence ID" value="XM_006527441.3"/>
</dbReference>
<dbReference type="BMRB" id="Q8BGT7"/>
<dbReference type="SMR" id="Q8BGT7"/>
<dbReference type="BioGRID" id="218145">
    <property type="interactions" value="9"/>
</dbReference>
<dbReference type="FunCoup" id="Q8BGT7">
    <property type="interactions" value="4671"/>
</dbReference>
<dbReference type="IntAct" id="Q8BGT7">
    <property type="interactions" value="3"/>
</dbReference>
<dbReference type="STRING" id="10090.ENSMUSP00000025997"/>
<dbReference type="GlyGen" id="Q8BGT7">
    <property type="glycosylation" value="1 site, 1 N-linked glycan (1 site)"/>
</dbReference>
<dbReference type="iPTMnet" id="Q8BGT7"/>
<dbReference type="PhosphoSitePlus" id="Q8BGT7"/>
<dbReference type="jPOST" id="Q8BGT7"/>
<dbReference type="PaxDb" id="10090-ENSMUSP00000025997"/>
<dbReference type="PeptideAtlas" id="Q8BGT7"/>
<dbReference type="ProteomicsDB" id="257348"/>
<dbReference type="Pumba" id="Q8BGT7"/>
<dbReference type="Antibodypedia" id="31698">
    <property type="antibodies" value="304 antibodies from 29 providers"/>
</dbReference>
<dbReference type="DNASU" id="76479"/>
<dbReference type="Ensembl" id="ENSMUST00000025997.7">
    <property type="protein sequence ID" value="ENSMUSP00000025997.6"/>
    <property type="gene ID" value="ENSMUSG00000025024.8"/>
</dbReference>
<dbReference type="Ensembl" id="ENSMUST00000237529.2">
    <property type="protein sequence ID" value="ENSMUSP00000157540.2"/>
    <property type="gene ID" value="ENSMUSG00000025024.8"/>
</dbReference>
<dbReference type="GeneID" id="76479"/>
<dbReference type="KEGG" id="mmu:76479"/>
<dbReference type="UCSC" id="uc008hws.1">
    <property type="organism name" value="mouse"/>
</dbReference>
<dbReference type="AGR" id="MGI:1923729"/>
<dbReference type="CTD" id="10285"/>
<dbReference type="MGI" id="MGI:1923729">
    <property type="gene designation" value="Smndc1"/>
</dbReference>
<dbReference type="VEuPathDB" id="HostDB:ENSMUSG00000025024"/>
<dbReference type="eggNOG" id="KOG3026">
    <property type="taxonomic scope" value="Eukaryota"/>
</dbReference>
<dbReference type="GeneTree" id="ENSGT00940000153352"/>
<dbReference type="HOGENOM" id="CLU_069491_3_0_1"/>
<dbReference type="InParanoid" id="Q8BGT7"/>
<dbReference type="OMA" id="CMAVWSQ"/>
<dbReference type="OrthoDB" id="79171at2759"/>
<dbReference type="PhylomeDB" id="Q8BGT7"/>
<dbReference type="TreeFam" id="TF315413"/>
<dbReference type="Reactome" id="R-MMU-72163">
    <property type="pathway name" value="mRNA Splicing - Major Pathway"/>
</dbReference>
<dbReference type="BioGRID-ORCS" id="76479">
    <property type="hits" value="23 hits in 75 CRISPR screens"/>
</dbReference>
<dbReference type="ChiTaRS" id="Smndc1">
    <property type="organism name" value="mouse"/>
</dbReference>
<dbReference type="PRO" id="PR:Q8BGT7"/>
<dbReference type="Proteomes" id="UP000000589">
    <property type="component" value="Chromosome 19"/>
</dbReference>
<dbReference type="RNAct" id="Q8BGT7">
    <property type="molecule type" value="protein"/>
</dbReference>
<dbReference type="Bgee" id="ENSMUSG00000025024">
    <property type="expression patterns" value="Expressed in metanephric cortical collecting duct and 271 other cell types or tissues"/>
</dbReference>
<dbReference type="ExpressionAtlas" id="Q8BGT7">
    <property type="expression patterns" value="baseline and differential"/>
</dbReference>
<dbReference type="GO" id="GO:0015030">
    <property type="term" value="C:Cajal body"/>
    <property type="evidence" value="ECO:0007669"/>
    <property type="project" value="UniProtKB-SubCell"/>
</dbReference>
<dbReference type="GO" id="GO:0005737">
    <property type="term" value="C:cytoplasm"/>
    <property type="evidence" value="ECO:0007669"/>
    <property type="project" value="InterPro"/>
</dbReference>
<dbReference type="GO" id="GO:0016607">
    <property type="term" value="C:nuclear speck"/>
    <property type="evidence" value="ECO:0007669"/>
    <property type="project" value="UniProtKB-SubCell"/>
</dbReference>
<dbReference type="GO" id="GO:0005681">
    <property type="term" value="C:spliceosomal complex"/>
    <property type="evidence" value="ECO:0007669"/>
    <property type="project" value="UniProtKB-KW"/>
</dbReference>
<dbReference type="GO" id="GO:0003723">
    <property type="term" value="F:RNA binding"/>
    <property type="evidence" value="ECO:0007669"/>
    <property type="project" value="InterPro"/>
</dbReference>
<dbReference type="GO" id="GO:0006915">
    <property type="term" value="P:apoptotic process"/>
    <property type="evidence" value="ECO:0007669"/>
    <property type="project" value="UniProtKB-KW"/>
</dbReference>
<dbReference type="GO" id="GO:0006397">
    <property type="term" value="P:mRNA processing"/>
    <property type="evidence" value="ECO:0007669"/>
    <property type="project" value="UniProtKB-KW"/>
</dbReference>
<dbReference type="GO" id="GO:0008380">
    <property type="term" value="P:RNA splicing"/>
    <property type="evidence" value="ECO:0007669"/>
    <property type="project" value="UniProtKB-KW"/>
</dbReference>
<dbReference type="CDD" id="cd20399">
    <property type="entry name" value="Tudor_SPF30"/>
    <property type="match status" value="1"/>
</dbReference>
<dbReference type="FunFam" id="2.30.30.140:FF:000038">
    <property type="entry name" value="Survival of motor neuron-related-splicing factor 30"/>
    <property type="match status" value="1"/>
</dbReference>
<dbReference type="Gene3D" id="2.30.30.140">
    <property type="match status" value="1"/>
</dbReference>
<dbReference type="InterPro" id="IPR010304">
    <property type="entry name" value="SMN_Tudor"/>
</dbReference>
<dbReference type="InterPro" id="IPR002999">
    <property type="entry name" value="Tudor"/>
</dbReference>
<dbReference type="PANTHER" id="PTHR13681:SF26">
    <property type="entry name" value="SURVIVAL OF MOTOR NEURON-RELATED-SPLICING FACTOR 30"/>
    <property type="match status" value="1"/>
</dbReference>
<dbReference type="PANTHER" id="PTHR13681">
    <property type="entry name" value="SURVIVAL OF MOTOR NEURON-RELATED-SPLICING FACTOR 30-RELATED"/>
    <property type="match status" value="1"/>
</dbReference>
<dbReference type="Pfam" id="PF06003">
    <property type="entry name" value="SMN_Tudor"/>
    <property type="match status" value="1"/>
</dbReference>
<dbReference type="SMART" id="SM00333">
    <property type="entry name" value="TUDOR"/>
    <property type="match status" value="1"/>
</dbReference>
<dbReference type="SUPFAM" id="SSF63748">
    <property type="entry name" value="Tudor/PWWP/MBT"/>
    <property type="match status" value="1"/>
</dbReference>
<dbReference type="PROSITE" id="PS50304">
    <property type="entry name" value="TUDOR"/>
    <property type="match status" value="1"/>
</dbReference>
<comment type="function">
    <text evidence="1">Involved in spliceosome assembly (By similarity).</text>
</comment>
<comment type="subunit">
    <text evidence="1">Associates with spliceosomes. Associates with U4/U5/U6 tri-snRNP and with U2 snRNP (By similarity).</text>
</comment>
<comment type="subcellular location">
    <subcellularLocation>
        <location evidence="1">Nucleus speckle</location>
    </subcellularLocation>
    <subcellularLocation>
        <location evidence="1">Nucleus</location>
        <location evidence="1">Cajal body</location>
    </subcellularLocation>
    <text evidence="1">Detected in nuclear speckles containing snRNP and in Cajal (coiled) bodies.</text>
</comment>
<comment type="domain">
    <text evidence="1">The Tudor domain mediates association with dimethylarginines, which are common in snRNP proteins.</text>
</comment>
<comment type="similarity">
    <text evidence="4">Belongs to the SMN family.</text>
</comment>
<protein>
    <recommendedName>
        <fullName>Survival of motor neuron-related-splicing factor 30</fullName>
    </recommendedName>
    <alternativeName>
        <fullName>30 kDa splicing factor SMNrp</fullName>
    </alternativeName>
    <alternativeName>
        <fullName>SMN-related protein</fullName>
    </alternativeName>
    <alternativeName>
        <fullName>Survival motor neuron domain-containing protein 1</fullName>
    </alternativeName>
</protein>
<keyword id="KW-0007">Acetylation</keyword>
<keyword id="KW-0053">Apoptosis</keyword>
<keyword id="KW-0507">mRNA processing</keyword>
<keyword id="KW-0508">mRNA splicing</keyword>
<keyword id="KW-0539">Nucleus</keyword>
<keyword id="KW-0597">Phosphoprotein</keyword>
<keyword id="KW-1185">Reference proteome</keyword>
<keyword id="KW-0747">Spliceosome</keyword>
<name>SPF30_MOUSE</name>
<gene>
    <name type="primary">Smndc1</name>
    <name type="synonym">Smnr</name>
    <name type="synonym">Spf30</name>
</gene>
<accession>Q8BGT7</accession>
<accession>Q4QQL0</accession>
<sequence length="238" mass="26753">MSEDLAKQLASYKAQLQQVEAALSGNGENEDLLKLKKDLQEVIELTKDLLSTQPSETLASSDSFASTQPTHSWKVGDKCMAVWSEDGQCYEAEIEEIDEENGTAAITFAVYGNAEVTPLLNLKPVEEGRKAKEDSGNKPMSKKEMIAQQREYKKKKALKKAQRIKELEQEREDQKVKWQQFNNRAYSKNKKGQVKRSIFASPESVTGKVGVGTCGIADKPMTQYQDTSKYNVRHLMPQ</sequence>
<evidence type="ECO:0000250" key="1">
    <source>
        <dbReference type="UniProtKB" id="O75940"/>
    </source>
</evidence>
<evidence type="ECO:0000255" key="2"/>
<evidence type="ECO:0000255" key="3">
    <source>
        <dbReference type="PROSITE-ProRule" id="PRU00211"/>
    </source>
</evidence>
<evidence type="ECO:0000305" key="4"/>